<dbReference type="EC" id="7.6.2.11" evidence="1"/>
<dbReference type="EMBL" id="BA000033">
    <property type="protein sequence ID" value="BAB94847.1"/>
    <property type="molecule type" value="Genomic_DNA"/>
</dbReference>
<dbReference type="RefSeq" id="WP_000433551.1">
    <property type="nucleotide sequence ID" value="NC_003923.1"/>
</dbReference>
<dbReference type="SMR" id="Q7A169"/>
<dbReference type="KEGG" id="sam:MW0982"/>
<dbReference type="HOGENOM" id="CLU_000604_1_1_9"/>
<dbReference type="GO" id="GO:0043190">
    <property type="term" value="C:ATP-binding cassette (ABC) transporter complex"/>
    <property type="evidence" value="ECO:0007669"/>
    <property type="project" value="InterPro"/>
</dbReference>
<dbReference type="GO" id="GO:0015417">
    <property type="term" value="F:ABC-type polyamine transporter activity"/>
    <property type="evidence" value="ECO:0007669"/>
    <property type="project" value="UniProtKB-EC"/>
</dbReference>
<dbReference type="GO" id="GO:0005524">
    <property type="term" value="F:ATP binding"/>
    <property type="evidence" value="ECO:0007669"/>
    <property type="project" value="UniProtKB-KW"/>
</dbReference>
<dbReference type="GO" id="GO:0016887">
    <property type="term" value="F:ATP hydrolysis activity"/>
    <property type="evidence" value="ECO:0007669"/>
    <property type="project" value="InterPro"/>
</dbReference>
<dbReference type="FunFam" id="3.40.50.300:FF:000133">
    <property type="entry name" value="Spermidine/putrescine import ATP-binding protein PotA"/>
    <property type="match status" value="1"/>
</dbReference>
<dbReference type="Gene3D" id="2.40.50.100">
    <property type="match status" value="1"/>
</dbReference>
<dbReference type="Gene3D" id="3.40.50.300">
    <property type="entry name" value="P-loop containing nucleotide triphosphate hydrolases"/>
    <property type="match status" value="1"/>
</dbReference>
<dbReference type="InterPro" id="IPR003593">
    <property type="entry name" value="AAA+_ATPase"/>
</dbReference>
<dbReference type="InterPro" id="IPR050093">
    <property type="entry name" value="ABC_SmlMolc_Importer"/>
</dbReference>
<dbReference type="InterPro" id="IPR003439">
    <property type="entry name" value="ABC_transporter-like_ATP-bd"/>
</dbReference>
<dbReference type="InterPro" id="IPR017871">
    <property type="entry name" value="ABC_transporter-like_CS"/>
</dbReference>
<dbReference type="InterPro" id="IPR008995">
    <property type="entry name" value="Mo/tungstate-bd_C_term_dom"/>
</dbReference>
<dbReference type="InterPro" id="IPR027417">
    <property type="entry name" value="P-loop_NTPase"/>
</dbReference>
<dbReference type="InterPro" id="IPR013611">
    <property type="entry name" value="Transp-assoc_OB_typ2"/>
</dbReference>
<dbReference type="PANTHER" id="PTHR42781">
    <property type="entry name" value="SPERMIDINE/PUTRESCINE IMPORT ATP-BINDING PROTEIN POTA"/>
    <property type="match status" value="1"/>
</dbReference>
<dbReference type="PANTHER" id="PTHR42781:SF4">
    <property type="entry name" value="SPERMIDINE_PUTRESCINE IMPORT ATP-BINDING PROTEIN POTA"/>
    <property type="match status" value="1"/>
</dbReference>
<dbReference type="Pfam" id="PF00005">
    <property type="entry name" value="ABC_tran"/>
    <property type="match status" value="1"/>
</dbReference>
<dbReference type="Pfam" id="PF08402">
    <property type="entry name" value="TOBE_2"/>
    <property type="match status" value="1"/>
</dbReference>
<dbReference type="SMART" id="SM00382">
    <property type="entry name" value="AAA"/>
    <property type="match status" value="1"/>
</dbReference>
<dbReference type="SUPFAM" id="SSF50331">
    <property type="entry name" value="MOP-like"/>
    <property type="match status" value="1"/>
</dbReference>
<dbReference type="SUPFAM" id="SSF52540">
    <property type="entry name" value="P-loop containing nucleoside triphosphate hydrolases"/>
    <property type="match status" value="1"/>
</dbReference>
<dbReference type="PROSITE" id="PS00211">
    <property type="entry name" value="ABC_TRANSPORTER_1"/>
    <property type="match status" value="1"/>
</dbReference>
<dbReference type="PROSITE" id="PS50893">
    <property type="entry name" value="ABC_TRANSPORTER_2"/>
    <property type="match status" value="1"/>
</dbReference>
<dbReference type="PROSITE" id="PS51305">
    <property type="entry name" value="POTA"/>
    <property type="match status" value="1"/>
</dbReference>
<keyword id="KW-0067">ATP-binding</keyword>
<keyword id="KW-1003">Cell membrane</keyword>
<keyword id="KW-0472">Membrane</keyword>
<keyword id="KW-0547">Nucleotide-binding</keyword>
<keyword id="KW-1278">Translocase</keyword>
<keyword id="KW-0813">Transport</keyword>
<proteinExistence type="inferred from homology"/>
<feature type="chain" id="PRO_0000092759" description="Spermidine/putrescine import ATP-binding protein PotA">
    <location>
        <begin position="1"/>
        <end position="364"/>
    </location>
</feature>
<feature type="domain" description="ABC transporter" evidence="1">
    <location>
        <begin position="5"/>
        <end position="235"/>
    </location>
</feature>
<feature type="binding site" evidence="1">
    <location>
        <begin position="37"/>
        <end position="44"/>
    </location>
    <ligand>
        <name>ATP</name>
        <dbReference type="ChEBI" id="CHEBI:30616"/>
    </ligand>
</feature>
<reference key="1">
    <citation type="journal article" date="2002" name="Lancet">
        <title>Genome and virulence determinants of high virulence community-acquired MRSA.</title>
        <authorList>
            <person name="Baba T."/>
            <person name="Takeuchi F."/>
            <person name="Kuroda M."/>
            <person name="Yuzawa H."/>
            <person name="Aoki K."/>
            <person name="Oguchi A."/>
            <person name="Nagai Y."/>
            <person name="Iwama N."/>
            <person name="Asano K."/>
            <person name="Naimi T."/>
            <person name="Kuroda H."/>
            <person name="Cui L."/>
            <person name="Yamamoto K."/>
            <person name="Hiramatsu K."/>
        </authorList>
    </citation>
    <scope>NUCLEOTIDE SEQUENCE [LARGE SCALE GENOMIC DNA]</scope>
    <source>
        <strain>MW2</strain>
    </source>
</reference>
<comment type="function">
    <text evidence="1">Part of the ABC transporter complex PotABCD involved in spermidine/putrescine import. Responsible for energy coupling to the transport system.</text>
</comment>
<comment type="catalytic activity">
    <reaction evidence="1">
        <text>ATP + H2O + polyamine-[polyamine-binding protein]Side 1 = ADP + phosphate + polyamineSide 2 + [polyamine-binding protein]Side 1.</text>
        <dbReference type="EC" id="7.6.2.11"/>
    </reaction>
</comment>
<comment type="subunit">
    <text evidence="1">The complex is composed of two ATP-binding proteins (PotA), two transmembrane proteins (PotB and PotC) and a solute-binding protein (PotD).</text>
</comment>
<comment type="subcellular location">
    <subcellularLocation>
        <location evidence="1">Cell membrane</location>
        <topology evidence="1">Peripheral membrane protein</topology>
    </subcellularLocation>
</comment>
<comment type="similarity">
    <text evidence="1">Belongs to the ABC transporter superfamily. Spermidine/putrescine importer (TC 3.A.1.11.1) family.</text>
</comment>
<protein>
    <recommendedName>
        <fullName evidence="1">Spermidine/putrescine import ATP-binding protein PotA</fullName>
        <ecNumber evidence="1">7.6.2.11</ecNumber>
    </recommendedName>
</protein>
<organism>
    <name type="scientific">Staphylococcus aureus (strain MW2)</name>
    <dbReference type="NCBI Taxonomy" id="196620"/>
    <lineage>
        <taxon>Bacteria</taxon>
        <taxon>Bacillati</taxon>
        <taxon>Bacillota</taxon>
        <taxon>Bacilli</taxon>
        <taxon>Bacillales</taxon>
        <taxon>Staphylococcaceae</taxon>
        <taxon>Staphylococcus</taxon>
    </lineage>
</organism>
<sequence length="364" mass="41330">MEPLLSLKSVSKSYDDLNILDDIDIDIESGYFYTLLGPSGCGKTTILKLIAGFEYPDSGEVIYQNKPIGNLPPNKRKVNTVFQDYALFPHLNVYDNIAFGLKLKKLSKTEIDQKVTEALKLVKLSGYEKRNINEMSGGQKQRVAIARAIVNEPEILLLDESLSALDLKLRTEMQYELRELQSRLGITFIFVTHDQEEALALSDFLFVLKDGKIQQFGTPTDIYDEPVNRFVADFIGESNIVEGRMVRDYVVNIYGQDFECVDMGIPENKKVEVVIRPEDISLIKAEEGLFKATVDSMLFRGVHYEICCIDNKGYEWVIQTTKKAEVGSEVGLYFDPEAIHIMVPGETEEEFDKRIESYEEVDNA</sequence>
<evidence type="ECO:0000255" key="1">
    <source>
        <dbReference type="HAMAP-Rule" id="MF_01726"/>
    </source>
</evidence>
<name>POTA_STAAW</name>
<gene>
    <name evidence="1" type="primary">potA</name>
    <name type="ordered locus">MW0982</name>
</gene>
<accession>Q7A169</accession>